<dbReference type="EMBL" id="CU459141">
    <property type="protein sequence ID" value="CAM87977.1"/>
    <property type="molecule type" value="Genomic_DNA"/>
</dbReference>
<dbReference type="RefSeq" id="WP_012297364.1">
    <property type="nucleotide sequence ID" value="NZ_JBDGFB010000020.1"/>
</dbReference>
<dbReference type="SMR" id="B0V5P1"/>
<dbReference type="EnsemblBacteria" id="CAM87977">
    <property type="protein sequence ID" value="CAM87977"/>
    <property type="gene ID" value="ABAYE3168"/>
</dbReference>
<dbReference type="GeneID" id="92892571"/>
<dbReference type="KEGG" id="aby:ABAYE3168"/>
<dbReference type="HOGENOM" id="CLU_054919_3_2_6"/>
<dbReference type="GO" id="GO:0005829">
    <property type="term" value="C:cytosol"/>
    <property type="evidence" value="ECO:0007669"/>
    <property type="project" value="TreeGrafter"/>
</dbReference>
<dbReference type="GO" id="GO:0016020">
    <property type="term" value="C:membrane"/>
    <property type="evidence" value="ECO:0007669"/>
    <property type="project" value="TreeGrafter"/>
</dbReference>
<dbReference type="GO" id="GO:0043022">
    <property type="term" value="F:ribosome binding"/>
    <property type="evidence" value="ECO:0007669"/>
    <property type="project" value="TreeGrafter"/>
</dbReference>
<dbReference type="GO" id="GO:0003743">
    <property type="term" value="F:translation initiation factor activity"/>
    <property type="evidence" value="ECO:0007669"/>
    <property type="project" value="UniProtKB-UniRule"/>
</dbReference>
<dbReference type="GO" id="GO:0032790">
    <property type="term" value="P:ribosome disassembly"/>
    <property type="evidence" value="ECO:0007669"/>
    <property type="project" value="TreeGrafter"/>
</dbReference>
<dbReference type="FunFam" id="3.10.20.80:FF:000001">
    <property type="entry name" value="Translation initiation factor IF-3"/>
    <property type="match status" value="1"/>
</dbReference>
<dbReference type="FunFam" id="3.30.110.10:FF:000001">
    <property type="entry name" value="Translation initiation factor IF-3"/>
    <property type="match status" value="1"/>
</dbReference>
<dbReference type="Gene3D" id="3.30.110.10">
    <property type="entry name" value="Translation initiation factor 3 (IF-3), C-terminal domain"/>
    <property type="match status" value="1"/>
</dbReference>
<dbReference type="Gene3D" id="3.10.20.80">
    <property type="entry name" value="Translation initiation factor 3 (IF-3), N-terminal domain"/>
    <property type="match status" value="1"/>
</dbReference>
<dbReference type="HAMAP" id="MF_00080">
    <property type="entry name" value="IF_3"/>
    <property type="match status" value="1"/>
</dbReference>
<dbReference type="InterPro" id="IPR036788">
    <property type="entry name" value="T_IF-3_C_sf"/>
</dbReference>
<dbReference type="InterPro" id="IPR036787">
    <property type="entry name" value="T_IF-3_N_sf"/>
</dbReference>
<dbReference type="InterPro" id="IPR001288">
    <property type="entry name" value="Translation_initiation_fac_3"/>
</dbReference>
<dbReference type="InterPro" id="IPR019815">
    <property type="entry name" value="Translation_initiation_fac_3_C"/>
</dbReference>
<dbReference type="InterPro" id="IPR019814">
    <property type="entry name" value="Translation_initiation_fac_3_N"/>
</dbReference>
<dbReference type="NCBIfam" id="TIGR00168">
    <property type="entry name" value="infC"/>
    <property type="match status" value="1"/>
</dbReference>
<dbReference type="PANTHER" id="PTHR10938">
    <property type="entry name" value="TRANSLATION INITIATION FACTOR IF-3"/>
    <property type="match status" value="1"/>
</dbReference>
<dbReference type="PANTHER" id="PTHR10938:SF0">
    <property type="entry name" value="TRANSLATION INITIATION FACTOR IF-3, MITOCHONDRIAL"/>
    <property type="match status" value="1"/>
</dbReference>
<dbReference type="Pfam" id="PF00707">
    <property type="entry name" value="IF3_C"/>
    <property type="match status" value="1"/>
</dbReference>
<dbReference type="Pfam" id="PF05198">
    <property type="entry name" value="IF3_N"/>
    <property type="match status" value="1"/>
</dbReference>
<dbReference type="SUPFAM" id="SSF55200">
    <property type="entry name" value="Translation initiation factor IF3, C-terminal domain"/>
    <property type="match status" value="1"/>
</dbReference>
<dbReference type="SUPFAM" id="SSF54364">
    <property type="entry name" value="Translation initiation factor IF3, N-terminal domain"/>
    <property type="match status" value="1"/>
</dbReference>
<comment type="function">
    <text evidence="1">IF-3 binds to the 30S ribosomal subunit and shifts the equilibrium between 70S ribosomes and their 50S and 30S subunits in favor of the free subunits, thus enhancing the availability of 30S subunits on which protein synthesis initiation begins.</text>
</comment>
<comment type="subunit">
    <text evidence="1">Monomer.</text>
</comment>
<comment type="subcellular location">
    <subcellularLocation>
        <location evidence="1">Cytoplasm</location>
    </subcellularLocation>
</comment>
<comment type="similarity">
    <text evidence="1">Belongs to the IF-3 family.</text>
</comment>
<gene>
    <name evidence="1" type="primary">infC</name>
    <name type="ordered locus">ABAYE3168</name>
</gene>
<proteinExistence type="inferred from homology"/>
<feature type="chain" id="PRO_1000092767" description="Translation initiation factor IF-3">
    <location>
        <begin position="1"/>
        <end position="183"/>
    </location>
</feature>
<feature type="region of interest" description="Disordered" evidence="2">
    <location>
        <begin position="1"/>
        <end position="21"/>
    </location>
</feature>
<feature type="compositionally biased region" description="Polar residues" evidence="2">
    <location>
        <begin position="1"/>
        <end position="13"/>
    </location>
</feature>
<evidence type="ECO:0000255" key="1">
    <source>
        <dbReference type="HAMAP-Rule" id="MF_00080"/>
    </source>
</evidence>
<evidence type="ECO:0000256" key="2">
    <source>
        <dbReference type="SAM" id="MobiDB-lite"/>
    </source>
</evidence>
<reference key="1">
    <citation type="journal article" date="2008" name="PLoS ONE">
        <title>Comparative analysis of Acinetobacters: three genomes for three lifestyles.</title>
        <authorList>
            <person name="Vallenet D."/>
            <person name="Nordmann P."/>
            <person name="Barbe V."/>
            <person name="Poirel L."/>
            <person name="Mangenot S."/>
            <person name="Bataille E."/>
            <person name="Dossat C."/>
            <person name="Gas S."/>
            <person name="Kreimeyer A."/>
            <person name="Lenoble P."/>
            <person name="Oztas S."/>
            <person name="Poulain J."/>
            <person name="Segurens B."/>
            <person name="Robert C."/>
            <person name="Abergel C."/>
            <person name="Claverie J.-M."/>
            <person name="Raoult D."/>
            <person name="Medigue C."/>
            <person name="Weissenbach J."/>
            <person name="Cruveiller S."/>
        </authorList>
    </citation>
    <scope>NUCLEOTIDE SEQUENCE [LARGE SCALE GENOMIC DNA]</scope>
    <source>
        <strain>AYE</strain>
    </source>
</reference>
<accession>B0V5P1</accession>
<sequence length="183" mass="20640">MKQPDRNQQQGAKSNRPAINDEIRAKEVRLVGADGEQKGIVSLNEALRAAEDADLDLVEIVANAEPPVCKIMDYNKHLFDLKQKQKDAKKKQHQVQVKEIKLRPATDVGDYQVKLRAILKFLEEGNKVKITLRFRGREMAHQQLGLAQLQKIEADVAELGVVEQAPKMEGRQMGMLLGPKKKK</sequence>
<keyword id="KW-0963">Cytoplasm</keyword>
<keyword id="KW-0396">Initiation factor</keyword>
<keyword id="KW-0648">Protein biosynthesis</keyword>
<name>IF3_ACIBY</name>
<organism>
    <name type="scientific">Acinetobacter baumannii (strain AYE)</name>
    <dbReference type="NCBI Taxonomy" id="509173"/>
    <lineage>
        <taxon>Bacteria</taxon>
        <taxon>Pseudomonadati</taxon>
        <taxon>Pseudomonadota</taxon>
        <taxon>Gammaproteobacteria</taxon>
        <taxon>Moraxellales</taxon>
        <taxon>Moraxellaceae</taxon>
        <taxon>Acinetobacter</taxon>
        <taxon>Acinetobacter calcoaceticus/baumannii complex</taxon>
    </lineage>
</organism>
<protein>
    <recommendedName>
        <fullName evidence="1">Translation initiation factor IF-3</fullName>
    </recommendedName>
</protein>